<evidence type="ECO:0000250" key="1"/>
<evidence type="ECO:0000250" key="2">
    <source>
        <dbReference type="UniProtKB" id="Q9TWF9"/>
    </source>
</evidence>
<evidence type="ECO:0000250" key="3">
    <source>
        <dbReference type="UniProtKB" id="Q9TWG0"/>
    </source>
</evidence>
<evidence type="ECO:0000255" key="4">
    <source>
        <dbReference type="PROSITE-ProRule" id="PRU00031"/>
    </source>
</evidence>
<evidence type="ECO:0000303" key="5">
    <source>
    </source>
</evidence>
<evidence type="ECO:0000303" key="6">
    <source>
    </source>
</evidence>
<evidence type="ECO:0000305" key="7"/>
<evidence type="ECO:0000305" key="8">
    <source>
    </source>
</evidence>
<protein>
    <recommendedName>
        <fullName evidence="6">U-actitoxin-Avd3k</fullName>
        <shortName evidence="6">U-AITX-Avd3k</shortName>
    </recommendedName>
    <alternativeName>
        <fullName evidence="5">AsKC8</fullName>
    </alternativeName>
</protein>
<comment type="function">
    <text evidence="2">Dual-function toxin that inhibits both the serine protease trypsin and voltage-gated potassium channels Kv1.2/KCNA2.</text>
</comment>
<comment type="subcellular location">
    <subcellularLocation>
        <location evidence="7">Secreted</location>
    </subcellularLocation>
    <subcellularLocation>
        <location evidence="7">Nematocyst</location>
    </subcellularLocation>
</comment>
<comment type="similarity">
    <text evidence="7">Belongs to the venom Kunitz-type family. Sea anemone type 2 potassium channel toxin subfamily.</text>
</comment>
<comment type="caution">
    <text evidence="7">Opinions are divided on whether Anemonia viridis (Forsskal, 1775) and Anemonia sulcata (Pennant, 1777) are separate species.</text>
</comment>
<keyword id="KW-1015">Disulfide bond</keyword>
<keyword id="KW-0872">Ion channel impairing toxin</keyword>
<keyword id="KW-0166">Nematocyst</keyword>
<keyword id="KW-0632">Potassium channel impairing toxin</keyword>
<keyword id="KW-0646">Protease inhibitor</keyword>
<keyword id="KW-0964">Secreted</keyword>
<keyword id="KW-0722">Serine protease inhibitor</keyword>
<keyword id="KW-0732">Signal</keyword>
<keyword id="KW-0800">Toxin</keyword>
<keyword id="KW-1220">Voltage-gated potassium channel impairing toxin</keyword>
<organism>
    <name type="scientific">Anemonia viridis</name>
    <name type="common">Snakelocks anemone</name>
    <dbReference type="NCBI Taxonomy" id="51769"/>
    <lineage>
        <taxon>Eukaryota</taxon>
        <taxon>Metazoa</taxon>
        <taxon>Cnidaria</taxon>
        <taxon>Anthozoa</taxon>
        <taxon>Hexacorallia</taxon>
        <taxon>Actiniaria</taxon>
        <taxon>Actiniidae</taxon>
        <taxon>Anemonia</taxon>
    </lineage>
</organism>
<proteinExistence type="inferred from homology"/>
<feature type="signal peptide" evidence="3">
    <location>
        <begin position="1"/>
        <end position="16"/>
    </location>
</feature>
<feature type="chain" id="PRO_0000433763" description="U-actitoxin-Avd3k">
    <location>
        <begin position="17"/>
        <end position="75"/>
    </location>
</feature>
<feature type="propeptide" id="PRO_0000433764" evidence="8">
    <location>
        <begin position="76"/>
        <end position="82"/>
    </location>
</feature>
<feature type="domain" description="BPTI/Kunitz inhibitor" evidence="4">
    <location>
        <begin position="21"/>
        <end position="71"/>
    </location>
</feature>
<feature type="site" description="Reactive bond for trypsin" evidence="1">
    <location>
        <begin position="31"/>
        <end position="32"/>
    </location>
</feature>
<feature type="disulfide bond" evidence="4">
    <location>
        <begin position="21"/>
        <end position="71"/>
    </location>
</feature>
<feature type="disulfide bond" evidence="4">
    <location>
        <begin position="30"/>
        <end position="54"/>
    </location>
</feature>
<feature type="disulfide bond" evidence="4">
    <location>
        <begin position="46"/>
        <end position="67"/>
    </location>
</feature>
<dbReference type="EMBL" id="FK722334">
    <property type="status" value="NOT_ANNOTATED_CDS"/>
    <property type="molecule type" value="mRNA"/>
</dbReference>
<dbReference type="EMBL" id="FK737063">
    <property type="status" value="NOT_ANNOTATED_CDS"/>
    <property type="molecule type" value="mRNA"/>
</dbReference>
<dbReference type="SMR" id="P0DN12"/>
<dbReference type="GO" id="GO:0005615">
    <property type="term" value="C:extracellular space"/>
    <property type="evidence" value="ECO:0007669"/>
    <property type="project" value="TreeGrafter"/>
</dbReference>
<dbReference type="GO" id="GO:0042151">
    <property type="term" value="C:nematocyst"/>
    <property type="evidence" value="ECO:0007669"/>
    <property type="project" value="UniProtKB-SubCell"/>
</dbReference>
<dbReference type="GO" id="GO:0015459">
    <property type="term" value="F:potassium channel regulator activity"/>
    <property type="evidence" value="ECO:0007669"/>
    <property type="project" value="UniProtKB-KW"/>
</dbReference>
<dbReference type="GO" id="GO:0004867">
    <property type="term" value="F:serine-type endopeptidase inhibitor activity"/>
    <property type="evidence" value="ECO:0007669"/>
    <property type="project" value="UniProtKB-KW"/>
</dbReference>
<dbReference type="GO" id="GO:0090729">
    <property type="term" value="F:toxin activity"/>
    <property type="evidence" value="ECO:0007669"/>
    <property type="project" value="UniProtKB-KW"/>
</dbReference>
<dbReference type="CDD" id="cd22633">
    <property type="entry name" value="Kunitz_actitoxin-like"/>
    <property type="match status" value="1"/>
</dbReference>
<dbReference type="FunFam" id="4.10.410.10:FF:000021">
    <property type="entry name" value="Serine protease inhibitor, putative"/>
    <property type="match status" value="1"/>
</dbReference>
<dbReference type="Gene3D" id="4.10.410.10">
    <property type="entry name" value="Pancreatic trypsin inhibitor Kunitz domain"/>
    <property type="match status" value="1"/>
</dbReference>
<dbReference type="InterPro" id="IPR002223">
    <property type="entry name" value="Kunitz_BPTI"/>
</dbReference>
<dbReference type="InterPro" id="IPR036880">
    <property type="entry name" value="Kunitz_BPTI_sf"/>
</dbReference>
<dbReference type="InterPro" id="IPR020901">
    <property type="entry name" value="Prtase_inh_Kunz-CS"/>
</dbReference>
<dbReference type="InterPro" id="IPR050098">
    <property type="entry name" value="TFPI/VKTCI-like"/>
</dbReference>
<dbReference type="PANTHER" id="PTHR10083:SF374">
    <property type="entry name" value="BPTI_KUNITZ INHIBITOR DOMAIN-CONTAINING PROTEIN"/>
    <property type="match status" value="1"/>
</dbReference>
<dbReference type="PANTHER" id="PTHR10083">
    <property type="entry name" value="KUNITZ-TYPE PROTEASE INHIBITOR-RELATED"/>
    <property type="match status" value="1"/>
</dbReference>
<dbReference type="Pfam" id="PF00014">
    <property type="entry name" value="Kunitz_BPTI"/>
    <property type="match status" value="1"/>
</dbReference>
<dbReference type="PRINTS" id="PR00759">
    <property type="entry name" value="BASICPTASE"/>
</dbReference>
<dbReference type="SMART" id="SM00131">
    <property type="entry name" value="KU"/>
    <property type="match status" value="1"/>
</dbReference>
<dbReference type="SUPFAM" id="SSF57362">
    <property type="entry name" value="BPTI-like"/>
    <property type="match status" value="1"/>
</dbReference>
<dbReference type="PROSITE" id="PS00280">
    <property type="entry name" value="BPTI_KUNITZ_1"/>
    <property type="match status" value="1"/>
</dbReference>
<dbReference type="PROSITE" id="PS50279">
    <property type="entry name" value="BPTI_KUNITZ_2"/>
    <property type="match status" value="1"/>
</dbReference>
<reference key="1">
    <citation type="journal article" date="2009" name="BMC Genomics">
        <title>Comprehensive EST analysis of the symbiotic sea anemone, Anemonia viridis.</title>
        <authorList>
            <person name="Sabourault C."/>
            <person name="Ganot P."/>
            <person name="Deleury E."/>
            <person name="Allemand D."/>
            <person name="Furla P."/>
        </authorList>
    </citation>
    <scope>NUCLEOTIDE SEQUENCE [MRNA]</scope>
</reference>
<reference key="2">
    <citation type="journal article" date="2011" name="BMC Genomics">
        <title>The mining of toxin-like polypeptides from EST database by single residue distribution analysis.</title>
        <authorList>
            <person name="Kozlov S."/>
            <person name="Grishin E."/>
        </authorList>
    </citation>
    <scope>NOMENCLATURE</scope>
</reference>
<reference key="3">
    <citation type="journal article" date="2012" name="Toxicon">
        <title>Development of a rational nomenclature for naming peptide and protein toxins from sea anemones.</title>
        <authorList>
            <person name="Oliveira J.S."/>
            <person name="Fuentes-Silva D."/>
            <person name="King G.F."/>
        </authorList>
    </citation>
    <scope>NOMENCLATURE</scope>
</reference>
<sequence>MVFLLCFFLVADVSYGINKDCLLPMDVGRCRARHPRYYYNSSSKRCEKFIYGGCRGNANNFITKKECEKVCGVRSRDSPKEN</sequence>
<accession>P0DN12</accession>
<name>VKT8_ANEVI</name>